<keyword id="KW-0240">DNA-directed RNA polymerase</keyword>
<keyword id="KW-0460">Magnesium</keyword>
<keyword id="KW-0479">Metal-binding</keyword>
<keyword id="KW-0548">Nucleotidyltransferase</keyword>
<keyword id="KW-0804">Transcription</keyword>
<keyword id="KW-0808">Transferase</keyword>
<keyword id="KW-0862">Zinc</keyword>
<evidence type="ECO:0000255" key="1">
    <source>
        <dbReference type="HAMAP-Rule" id="MF_01322"/>
    </source>
</evidence>
<comment type="function">
    <text evidence="1">DNA-dependent RNA polymerase catalyzes the transcription of DNA into RNA using the four ribonucleoside triphosphates as substrates.</text>
</comment>
<comment type="catalytic activity">
    <reaction evidence="1">
        <text>RNA(n) + a ribonucleoside 5'-triphosphate = RNA(n+1) + diphosphate</text>
        <dbReference type="Rhea" id="RHEA:21248"/>
        <dbReference type="Rhea" id="RHEA-COMP:14527"/>
        <dbReference type="Rhea" id="RHEA-COMP:17342"/>
        <dbReference type="ChEBI" id="CHEBI:33019"/>
        <dbReference type="ChEBI" id="CHEBI:61557"/>
        <dbReference type="ChEBI" id="CHEBI:140395"/>
        <dbReference type="EC" id="2.7.7.6"/>
    </reaction>
</comment>
<comment type="cofactor">
    <cofactor evidence="1">
        <name>Mg(2+)</name>
        <dbReference type="ChEBI" id="CHEBI:18420"/>
    </cofactor>
    <text evidence="1">Binds 1 Mg(2+) ion per subunit.</text>
</comment>
<comment type="cofactor">
    <cofactor evidence="1">
        <name>Zn(2+)</name>
        <dbReference type="ChEBI" id="CHEBI:29105"/>
    </cofactor>
    <text evidence="1">Binds 2 Zn(2+) ions per subunit.</text>
</comment>
<comment type="subunit">
    <text evidence="1">The RNAP catalytic core consists of 2 alpha, 1 beta, 1 beta' and 1 omega subunit. When a sigma factor is associated with the core the holoenzyme is formed, which can initiate transcription.</text>
</comment>
<comment type="similarity">
    <text evidence="1">Belongs to the RNA polymerase beta' chain family.</text>
</comment>
<name>RPOC_PSEA6</name>
<accession>Q15YB0</accession>
<proteinExistence type="inferred from homology"/>
<organism>
    <name type="scientific">Pseudoalteromonas atlantica (strain T6c / ATCC BAA-1087)</name>
    <dbReference type="NCBI Taxonomy" id="3042615"/>
    <lineage>
        <taxon>Bacteria</taxon>
        <taxon>Pseudomonadati</taxon>
        <taxon>Pseudomonadota</taxon>
        <taxon>Gammaproteobacteria</taxon>
        <taxon>Alteromonadales</taxon>
        <taxon>Alteromonadaceae</taxon>
        <taxon>Paraglaciecola</taxon>
    </lineage>
</organism>
<gene>
    <name evidence="1" type="primary">rpoC</name>
    <name type="ordered locus">Patl_0599</name>
</gene>
<dbReference type="EC" id="2.7.7.6" evidence="1"/>
<dbReference type="EMBL" id="CP000388">
    <property type="protein sequence ID" value="ABG39128.1"/>
    <property type="molecule type" value="Genomic_DNA"/>
</dbReference>
<dbReference type="RefSeq" id="WP_011573498.1">
    <property type="nucleotide sequence ID" value="NC_008228.1"/>
</dbReference>
<dbReference type="SMR" id="Q15YB0"/>
<dbReference type="STRING" id="342610.Patl_0599"/>
<dbReference type="KEGG" id="pat:Patl_0599"/>
<dbReference type="eggNOG" id="COG0086">
    <property type="taxonomic scope" value="Bacteria"/>
</dbReference>
<dbReference type="HOGENOM" id="CLU_000524_3_1_6"/>
<dbReference type="OrthoDB" id="9815296at2"/>
<dbReference type="Proteomes" id="UP000001981">
    <property type="component" value="Chromosome"/>
</dbReference>
<dbReference type="GO" id="GO:0000428">
    <property type="term" value="C:DNA-directed RNA polymerase complex"/>
    <property type="evidence" value="ECO:0007669"/>
    <property type="project" value="UniProtKB-KW"/>
</dbReference>
<dbReference type="GO" id="GO:0003677">
    <property type="term" value="F:DNA binding"/>
    <property type="evidence" value="ECO:0007669"/>
    <property type="project" value="UniProtKB-UniRule"/>
</dbReference>
<dbReference type="GO" id="GO:0003899">
    <property type="term" value="F:DNA-directed RNA polymerase activity"/>
    <property type="evidence" value="ECO:0007669"/>
    <property type="project" value="UniProtKB-UniRule"/>
</dbReference>
<dbReference type="GO" id="GO:0000287">
    <property type="term" value="F:magnesium ion binding"/>
    <property type="evidence" value="ECO:0007669"/>
    <property type="project" value="UniProtKB-UniRule"/>
</dbReference>
<dbReference type="GO" id="GO:0008270">
    <property type="term" value="F:zinc ion binding"/>
    <property type="evidence" value="ECO:0007669"/>
    <property type="project" value="UniProtKB-UniRule"/>
</dbReference>
<dbReference type="GO" id="GO:0006351">
    <property type="term" value="P:DNA-templated transcription"/>
    <property type="evidence" value="ECO:0007669"/>
    <property type="project" value="UniProtKB-UniRule"/>
</dbReference>
<dbReference type="CDD" id="cd02655">
    <property type="entry name" value="RNAP_beta'_C"/>
    <property type="match status" value="1"/>
</dbReference>
<dbReference type="CDD" id="cd01609">
    <property type="entry name" value="RNAP_beta'_N"/>
    <property type="match status" value="1"/>
</dbReference>
<dbReference type="FunFam" id="1.10.132.30:FF:000003">
    <property type="entry name" value="DNA-directed RNA polymerase subunit beta"/>
    <property type="match status" value="1"/>
</dbReference>
<dbReference type="FunFam" id="1.10.150.390:FF:000002">
    <property type="entry name" value="DNA-directed RNA polymerase subunit beta"/>
    <property type="match status" value="1"/>
</dbReference>
<dbReference type="FunFam" id="1.10.40.90:FF:000001">
    <property type="entry name" value="DNA-directed RNA polymerase subunit beta"/>
    <property type="match status" value="1"/>
</dbReference>
<dbReference type="FunFam" id="4.10.860.120:FF:000001">
    <property type="entry name" value="DNA-directed RNA polymerase subunit beta"/>
    <property type="match status" value="1"/>
</dbReference>
<dbReference type="Gene3D" id="1.10.132.30">
    <property type="match status" value="1"/>
</dbReference>
<dbReference type="Gene3D" id="1.10.150.390">
    <property type="match status" value="1"/>
</dbReference>
<dbReference type="Gene3D" id="1.10.1790.20">
    <property type="match status" value="1"/>
</dbReference>
<dbReference type="Gene3D" id="1.10.40.90">
    <property type="match status" value="1"/>
</dbReference>
<dbReference type="Gene3D" id="2.40.40.20">
    <property type="match status" value="1"/>
</dbReference>
<dbReference type="Gene3D" id="2.40.50.100">
    <property type="match status" value="3"/>
</dbReference>
<dbReference type="Gene3D" id="4.10.860.120">
    <property type="entry name" value="RNA polymerase II, clamp domain"/>
    <property type="match status" value="1"/>
</dbReference>
<dbReference type="Gene3D" id="1.10.274.100">
    <property type="entry name" value="RNA polymerase Rpb1, domain 3"/>
    <property type="match status" value="1"/>
</dbReference>
<dbReference type="HAMAP" id="MF_01322">
    <property type="entry name" value="RNApol_bact_RpoC"/>
    <property type="match status" value="1"/>
</dbReference>
<dbReference type="InterPro" id="IPR045867">
    <property type="entry name" value="DNA-dir_RpoC_beta_prime"/>
</dbReference>
<dbReference type="InterPro" id="IPR012754">
    <property type="entry name" value="DNA-dir_RpoC_beta_prime_bact"/>
</dbReference>
<dbReference type="InterPro" id="IPR000722">
    <property type="entry name" value="RNA_pol_asu"/>
</dbReference>
<dbReference type="InterPro" id="IPR006592">
    <property type="entry name" value="RNA_pol_N"/>
</dbReference>
<dbReference type="InterPro" id="IPR007080">
    <property type="entry name" value="RNA_pol_Rpb1_1"/>
</dbReference>
<dbReference type="InterPro" id="IPR007066">
    <property type="entry name" value="RNA_pol_Rpb1_3"/>
</dbReference>
<dbReference type="InterPro" id="IPR042102">
    <property type="entry name" value="RNA_pol_Rpb1_3_sf"/>
</dbReference>
<dbReference type="InterPro" id="IPR007083">
    <property type="entry name" value="RNA_pol_Rpb1_4"/>
</dbReference>
<dbReference type="InterPro" id="IPR007081">
    <property type="entry name" value="RNA_pol_Rpb1_5"/>
</dbReference>
<dbReference type="InterPro" id="IPR044893">
    <property type="entry name" value="RNA_pol_Rpb1_clamp_domain"/>
</dbReference>
<dbReference type="InterPro" id="IPR038120">
    <property type="entry name" value="Rpb1_funnel_sf"/>
</dbReference>
<dbReference type="NCBIfam" id="TIGR02386">
    <property type="entry name" value="rpoC_TIGR"/>
    <property type="match status" value="1"/>
</dbReference>
<dbReference type="PANTHER" id="PTHR19376">
    <property type="entry name" value="DNA-DIRECTED RNA POLYMERASE"/>
    <property type="match status" value="1"/>
</dbReference>
<dbReference type="PANTHER" id="PTHR19376:SF54">
    <property type="entry name" value="DNA-DIRECTED RNA POLYMERASE SUBUNIT BETA"/>
    <property type="match status" value="1"/>
</dbReference>
<dbReference type="Pfam" id="PF04997">
    <property type="entry name" value="RNA_pol_Rpb1_1"/>
    <property type="match status" value="1"/>
</dbReference>
<dbReference type="Pfam" id="PF00623">
    <property type="entry name" value="RNA_pol_Rpb1_2"/>
    <property type="match status" value="2"/>
</dbReference>
<dbReference type="Pfam" id="PF04983">
    <property type="entry name" value="RNA_pol_Rpb1_3"/>
    <property type="match status" value="1"/>
</dbReference>
<dbReference type="Pfam" id="PF05000">
    <property type="entry name" value="RNA_pol_Rpb1_4"/>
    <property type="match status" value="1"/>
</dbReference>
<dbReference type="Pfam" id="PF04998">
    <property type="entry name" value="RNA_pol_Rpb1_5"/>
    <property type="match status" value="1"/>
</dbReference>
<dbReference type="SMART" id="SM00663">
    <property type="entry name" value="RPOLA_N"/>
    <property type="match status" value="1"/>
</dbReference>
<dbReference type="SUPFAM" id="SSF64484">
    <property type="entry name" value="beta and beta-prime subunits of DNA dependent RNA-polymerase"/>
    <property type="match status" value="1"/>
</dbReference>
<sequence>MKDLLKFLKQQHKSEEFDNIRIGLASPDMIRSWSFGEVKKPETINYRTFKPERDGLFCARIFGPVKDYECLCGKYKRLKHRGVICEKCGVEVTLTKVRRERMGHIELASPVAHIWFLKSLPSRIGLMLDMTLRDIERVLYFESYVVAEPGMTTLERSQLLSEEEYLDALEEHGDEFEAKMGAEAVFELLKALDVDADVAAMREELPSINSETRRKKITKRLKLLESFQLSGNKPEWMILTVLPVLPPDLRPLVPLDGGRFATSDLNDLYRRVINRNNRLKRLLDLAAPDIIVRNEKRMLQEAVDALLDNGRRGRAITGSNKRPLKSLADMIKGKQGRFRQNLLGKRVDYSGRSVITVGPTLRLHQCGLPKKMALELFKPFIYGKLEGRGLATTIKAAKKLVEREDPEVWDVLDEVIREHPVLLNRAPTLHRLGIQAFEPTLIEGKAIQLHPLVCAAYNADFDGDQMAVHVPLTIEAQLEARALMMSTNNILSPANGEPIIVPSQDVVMGLYYMTRDRVNGLGEGMMFTSPDEAEKAYRTGNAELHARVKVRITEYDVAEDGSKTEKVTLTDTTVGRAILSLVLPKGLPFELINQAMGKKMISRLLNACYRTLGLKDTVIAADQIMYTGFHYAMIAGASVGIDDMVIPDAKKDIIEGAEAEVREIQEQFQSGLVTAGERYNKVIDIWSNANEKVAKAMMENLSIETVKNRDGEMEDQASFNSVFMMADSGARGSAAQIRQLAGMRGLMAKPDGSIIETPITANFREGLNVLQYFISTHGARKGLADTALKTANSGYLTRRLVDVAQDLVINNEDCGTFEGVKMTPLIEGGDVVEPLRERVLGRTVAEDVLKPGTNEILVERNVLLDEALVDMLESNSVDQIQVRSVITCENDFGVCAKCYGRDLARGHMVGHGEAVGVIAAQSIGEPGTQLTMRTFHIGGAASRASAENSVQVKTTGTLKLQNAKFVRNTDDKVVIVSRSTEITIIDDQGREKERYKVPYGAILTTDDNATVTSGEVVANWDPHSHPIVTERQAKISFADIDDSNTEMQQDELTGLTRIVVNDLSKANAKEPKLILESDEHGLQEIRLPSFTTIEATDGMQAKPGDVLARIPQESSKTRDITGGLPRVADLFEARKPKEPAILAEVSGTIGWGKETKGKKRLVITPKDADAYEEMIPKWRQLNVFEGENVEKGEVIADGPESPHDILRLRGISAVSNYIVNEVQEVYRLQGVKINDKHIEVVIRQMLRKCMITYAGDSNFLEGEQVEVSNVKIANRELEKQGKIPAQYETQLLGITKASLSTESFISAASFQETTRVLTEAAVQGKEDELRGLKENVIVGRLIPAGTGFAYHQKRTARKLAERQAVEELSVSAADAEQALTEALNAEVMDTPSSDE</sequence>
<protein>
    <recommendedName>
        <fullName evidence="1">DNA-directed RNA polymerase subunit beta'</fullName>
        <shortName evidence="1">RNAP subunit beta'</shortName>
        <ecNumber evidence="1">2.7.7.6</ecNumber>
    </recommendedName>
    <alternativeName>
        <fullName evidence="1">RNA polymerase subunit beta'</fullName>
    </alternativeName>
    <alternativeName>
        <fullName evidence="1">Transcriptase subunit beta'</fullName>
    </alternativeName>
</protein>
<feature type="chain" id="PRO_0000353409" description="DNA-directed RNA polymerase subunit beta'">
    <location>
        <begin position="1"/>
        <end position="1395"/>
    </location>
</feature>
<feature type="binding site" evidence="1">
    <location>
        <position position="70"/>
    </location>
    <ligand>
        <name>Zn(2+)</name>
        <dbReference type="ChEBI" id="CHEBI:29105"/>
        <label>1</label>
    </ligand>
</feature>
<feature type="binding site" evidence="1">
    <location>
        <position position="72"/>
    </location>
    <ligand>
        <name>Zn(2+)</name>
        <dbReference type="ChEBI" id="CHEBI:29105"/>
        <label>1</label>
    </ligand>
</feature>
<feature type="binding site" evidence="1">
    <location>
        <position position="85"/>
    </location>
    <ligand>
        <name>Zn(2+)</name>
        <dbReference type="ChEBI" id="CHEBI:29105"/>
        <label>1</label>
    </ligand>
</feature>
<feature type="binding site" evidence="1">
    <location>
        <position position="88"/>
    </location>
    <ligand>
        <name>Zn(2+)</name>
        <dbReference type="ChEBI" id="CHEBI:29105"/>
        <label>1</label>
    </ligand>
</feature>
<feature type="binding site" evidence="1">
    <location>
        <position position="460"/>
    </location>
    <ligand>
        <name>Mg(2+)</name>
        <dbReference type="ChEBI" id="CHEBI:18420"/>
    </ligand>
</feature>
<feature type="binding site" evidence="1">
    <location>
        <position position="462"/>
    </location>
    <ligand>
        <name>Mg(2+)</name>
        <dbReference type="ChEBI" id="CHEBI:18420"/>
    </ligand>
</feature>
<feature type="binding site" evidence="1">
    <location>
        <position position="464"/>
    </location>
    <ligand>
        <name>Mg(2+)</name>
        <dbReference type="ChEBI" id="CHEBI:18420"/>
    </ligand>
</feature>
<feature type="binding site" evidence="1">
    <location>
        <position position="814"/>
    </location>
    <ligand>
        <name>Zn(2+)</name>
        <dbReference type="ChEBI" id="CHEBI:29105"/>
        <label>2</label>
    </ligand>
</feature>
<feature type="binding site" evidence="1">
    <location>
        <position position="888"/>
    </location>
    <ligand>
        <name>Zn(2+)</name>
        <dbReference type="ChEBI" id="CHEBI:29105"/>
        <label>2</label>
    </ligand>
</feature>
<feature type="binding site" evidence="1">
    <location>
        <position position="895"/>
    </location>
    <ligand>
        <name>Zn(2+)</name>
        <dbReference type="ChEBI" id="CHEBI:29105"/>
        <label>2</label>
    </ligand>
</feature>
<feature type="binding site" evidence="1">
    <location>
        <position position="898"/>
    </location>
    <ligand>
        <name>Zn(2+)</name>
        <dbReference type="ChEBI" id="CHEBI:29105"/>
        <label>2</label>
    </ligand>
</feature>
<reference key="1">
    <citation type="submission" date="2006-06" db="EMBL/GenBank/DDBJ databases">
        <title>Complete sequence of Pseudoalteromonas atlantica T6c.</title>
        <authorList>
            <consortium name="US DOE Joint Genome Institute"/>
            <person name="Copeland A."/>
            <person name="Lucas S."/>
            <person name="Lapidus A."/>
            <person name="Barry K."/>
            <person name="Detter J.C."/>
            <person name="Glavina del Rio T."/>
            <person name="Hammon N."/>
            <person name="Israni S."/>
            <person name="Dalin E."/>
            <person name="Tice H."/>
            <person name="Pitluck S."/>
            <person name="Saunders E."/>
            <person name="Brettin T."/>
            <person name="Bruce D."/>
            <person name="Han C."/>
            <person name="Tapia R."/>
            <person name="Gilna P."/>
            <person name="Schmutz J."/>
            <person name="Larimer F."/>
            <person name="Land M."/>
            <person name="Hauser L."/>
            <person name="Kyrpides N."/>
            <person name="Kim E."/>
            <person name="Karls A.C."/>
            <person name="Bartlett D."/>
            <person name="Higgins B.P."/>
            <person name="Richardson P."/>
        </authorList>
    </citation>
    <scope>NUCLEOTIDE SEQUENCE [LARGE SCALE GENOMIC DNA]</scope>
    <source>
        <strain>T6c / ATCC BAA-1087</strain>
    </source>
</reference>